<proteinExistence type="inferred from homology"/>
<keyword id="KW-0285">Flavoprotein</keyword>
<keyword id="KW-0288">FMN</keyword>
<keyword id="KW-0520">NAD</keyword>
<keyword id="KW-0521">NADP</keyword>
<keyword id="KW-0547">Nucleotide-binding</keyword>
<keyword id="KW-0560">Oxidoreductase</keyword>
<keyword id="KW-1185">Reference proteome</keyword>
<organism>
    <name type="scientific">Geotalea daltonii (strain DSM 22248 / JCM 15807 / FRC-32)</name>
    <name type="common">Geobacter daltonii</name>
    <dbReference type="NCBI Taxonomy" id="316067"/>
    <lineage>
        <taxon>Bacteria</taxon>
        <taxon>Pseudomonadati</taxon>
        <taxon>Thermodesulfobacteriota</taxon>
        <taxon>Desulfuromonadia</taxon>
        <taxon>Geobacterales</taxon>
        <taxon>Geobacteraceae</taxon>
        <taxon>Geotalea</taxon>
    </lineage>
</organism>
<sequence length="205" mass="22108">MKVLVVYYSMYGHIHRMAEAIVEGAKEVVGAEVVLRRVPETLSHDVLEKMGAVEAQRSMSHIPICTVDELAEADAVIFGSPTRFGNMCGQMRQFLDATGGLWVKGSLIGKVGSVFASSNTQHGGQESTILSFHTTLLHHGMVIVGLPYAFQGQMRNDEITGGSPYGASTVAGTQGERQPTENELAAARYQGKHVASIAYKLVMAR</sequence>
<name>NQOR_GEODF</name>
<protein>
    <recommendedName>
        <fullName evidence="1">NAD(P)H dehydrogenase (quinone)</fullName>
        <ecNumber evidence="1">1.6.5.2</ecNumber>
    </recommendedName>
    <alternativeName>
        <fullName>Flavoprotein WrbA</fullName>
    </alternativeName>
    <alternativeName>
        <fullName evidence="1">NAD(P)H:quinone oxidoreductase</fullName>
        <shortName evidence="1">NQO</shortName>
    </alternativeName>
</protein>
<gene>
    <name type="ordered locus">Geob_3294</name>
</gene>
<dbReference type="EC" id="1.6.5.2" evidence="1"/>
<dbReference type="EMBL" id="CP001390">
    <property type="protein sequence ID" value="ACM21637.1"/>
    <property type="molecule type" value="Genomic_DNA"/>
</dbReference>
<dbReference type="RefSeq" id="WP_012648365.1">
    <property type="nucleotide sequence ID" value="NC_011979.1"/>
</dbReference>
<dbReference type="SMR" id="B9M4V3"/>
<dbReference type="STRING" id="316067.Geob_3294"/>
<dbReference type="KEGG" id="geo:Geob_3294"/>
<dbReference type="eggNOG" id="COG0655">
    <property type="taxonomic scope" value="Bacteria"/>
</dbReference>
<dbReference type="HOGENOM" id="CLU_051402_0_2_7"/>
<dbReference type="OrthoDB" id="9801479at2"/>
<dbReference type="Proteomes" id="UP000007721">
    <property type="component" value="Chromosome"/>
</dbReference>
<dbReference type="GO" id="GO:0016020">
    <property type="term" value="C:membrane"/>
    <property type="evidence" value="ECO:0007669"/>
    <property type="project" value="TreeGrafter"/>
</dbReference>
<dbReference type="GO" id="GO:0050660">
    <property type="term" value="F:flavin adenine dinucleotide binding"/>
    <property type="evidence" value="ECO:0007669"/>
    <property type="project" value="UniProtKB-UniRule"/>
</dbReference>
<dbReference type="GO" id="GO:0010181">
    <property type="term" value="F:FMN binding"/>
    <property type="evidence" value="ECO:0007669"/>
    <property type="project" value="InterPro"/>
</dbReference>
<dbReference type="GO" id="GO:0051287">
    <property type="term" value="F:NAD binding"/>
    <property type="evidence" value="ECO:0007669"/>
    <property type="project" value="UniProtKB-UniRule"/>
</dbReference>
<dbReference type="GO" id="GO:0050136">
    <property type="term" value="F:NADH:ubiquinone reductase (non-electrogenic) activity"/>
    <property type="evidence" value="ECO:0007669"/>
    <property type="project" value="RHEA"/>
</dbReference>
<dbReference type="GO" id="GO:0050661">
    <property type="term" value="F:NADP binding"/>
    <property type="evidence" value="ECO:0007669"/>
    <property type="project" value="UniProtKB-UniRule"/>
</dbReference>
<dbReference type="GO" id="GO:0008753">
    <property type="term" value="F:NADPH dehydrogenase (quinone) activity"/>
    <property type="evidence" value="ECO:0007669"/>
    <property type="project" value="RHEA"/>
</dbReference>
<dbReference type="FunFam" id="3.40.50.360:FF:000001">
    <property type="entry name" value="NAD(P)H dehydrogenase (Quinone) FQR1-like"/>
    <property type="match status" value="1"/>
</dbReference>
<dbReference type="Gene3D" id="3.40.50.360">
    <property type="match status" value="1"/>
</dbReference>
<dbReference type="HAMAP" id="MF_01017">
    <property type="entry name" value="NQOR"/>
    <property type="match status" value="1"/>
</dbReference>
<dbReference type="InterPro" id="IPR008254">
    <property type="entry name" value="Flavodoxin/NO_synth"/>
</dbReference>
<dbReference type="InterPro" id="IPR029039">
    <property type="entry name" value="Flavoprotein-like_sf"/>
</dbReference>
<dbReference type="InterPro" id="IPR010089">
    <property type="entry name" value="Flavoprotein_WrbA-like"/>
</dbReference>
<dbReference type="InterPro" id="IPR005025">
    <property type="entry name" value="FMN_Rdtase-like_dom"/>
</dbReference>
<dbReference type="InterPro" id="IPR037513">
    <property type="entry name" value="NQO"/>
</dbReference>
<dbReference type="NCBIfam" id="TIGR01755">
    <property type="entry name" value="flav_wrbA"/>
    <property type="match status" value="1"/>
</dbReference>
<dbReference type="NCBIfam" id="NF002999">
    <property type="entry name" value="PRK03767.1"/>
    <property type="match status" value="1"/>
</dbReference>
<dbReference type="PANTHER" id="PTHR30546">
    <property type="entry name" value="FLAVODOXIN-RELATED PROTEIN WRBA-RELATED"/>
    <property type="match status" value="1"/>
</dbReference>
<dbReference type="PANTHER" id="PTHR30546:SF23">
    <property type="entry name" value="FLAVOPROTEIN-LIKE PROTEIN YCP4-RELATED"/>
    <property type="match status" value="1"/>
</dbReference>
<dbReference type="Pfam" id="PF03358">
    <property type="entry name" value="FMN_red"/>
    <property type="match status" value="1"/>
</dbReference>
<dbReference type="SUPFAM" id="SSF52218">
    <property type="entry name" value="Flavoproteins"/>
    <property type="match status" value="1"/>
</dbReference>
<dbReference type="PROSITE" id="PS50902">
    <property type="entry name" value="FLAVODOXIN_LIKE"/>
    <property type="match status" value="1"/>
</dbReference>
<evidence type="ECO:0000255" key="1">
    <source>
        <dbReference type="HAMAP-Rule" id="MF_01017"/>
    </source>
</evidence>
<reference key="1">
    <citation type="submission" date="2009-01" db="EMBL/GenBank/DDBJ databases">
        <title>Complete sequence of Geobacter sp. FRC-32.</title>
        <authorList>
            <consortium name="US DOE Joint Genome Institute"/>
            <person name="Lucas S."/>
            <person name="Copeland A."/>
            <person name="Lapidus A."/>
            <person name="Glavina del Rio T."/>
            <person name="Dalin E."/>
            <person name="Tice H."/>
            <person name="Bruce D."/>
            <person name="Goodwin L."/>
            <person name="Pitluck S."/>
            <person name="Saunders E."/>
            <person name="Brettin T."/>
            <person name="Detter J.C."/>
            <person name="Han C."/>
            <person name="Larimer F."/>
            <person name="Land M."/>
            <person name="Hauser L."/>
            <person name="Kyrpides N."/>
            <person name="Ovchinnikova G."/>
            <person name="Kostka J."/>
            <person name="Richardson P."/>
        </authorList>
    </citation>
    <scope>NUCLEOTIDE SEQUENCE [LARGE SCALE GENOMIC DNA]</scope>
    <source>
        <strain>DSM 22248 / JCM 15807 / FRC-32</strain>
    </source>
</reference>
<feature type="chain" id="PRO_1000149010" description="NAD(P)H dehydrogenase (quinone)">
    <location>
        <begin position="1"/>
        <end position="205"/>
    </location>
</feature>
<feature type="domain" description="Flavodoxin-like" evidence="1">
    <location>
        <begin position="3"/>
        <end position="194"/>
    </location>
</feature>
<feature type="binding site" evidence="1">
    <location>
        <begin position="9"/>
        <end position="14"/>
    </location>
    <ligand>
        <name>FMN</name>
        <dbReference type="ChEBI" id="CHEBI:58210"/>
    </ligand>
</feature>
<feature type="binding site" evidence="1">
    <location>
        <position position="11"/>
    </location>
    <ligand>
        <name>NAD(+)</name>
        <dbReference type="ChEBI" id="CHEBI:57540"/>
    </ligand>
</feature>
<feature type="binding site" evidence="1">
    <location>
        <begin position="82"/>
        <end position="84"/>
    </location>
    <ligand>
        <name>FMN</name>
        <dbReference type="ChEBI" id="CHEBI:58210"/>
    </ligand>
</feature>
<feature type="binding site" evidence="1">
    <location>
        <position position="102"/>
    </location>
    <ligand>
        <name>substrate</name>
    </ligand>
</feature>
<feature type="binding site" evidence="1">
    <location>
        <position position="138"/>
    </location>
    <ligand>
        <name>FMN</name>
        <dbReference type="ChEBI" id="CHEBI:58210"/>
    </ligand>
</feature>
<comment type="catalytic activity">
    <reaction evidence="1">
        <text>a quinone + NADH + H(+) = a quinol + NAD(+)</text>
        <dbReference type="Rhea" id="RHEA:46160"/>
        <dbReference type="ChEBI" id="CHEBI:15378"/>
        <dbReference type="ChEBI" id="CHEBI:24646"/>
        <dbReference type="ChEBI" id="CHEBI:57540"/>
        <dbReference type="ChEBI" id="CHEBI:57945"/>
        <dbReference type="ChEBI" id="CHEBI:132124"/>
        <dbReference type="EC" id="1.6.5.2"/>
    </reaction>
</comment>
<comment type="catalytic activity">
    <reaction evidence="1">
        <text>a quinone + NADPH + H(+) = a quinol + NADP(+)</text>
        <dbReference type="Rhea" id="RHEA:46164"/>
        <dbReference type="ChEBI" id="CHEBI:15378"/>
        <dbReference type="ChEBI" id="CHEBI:24646"/>
        <dbReference type="ChEBI" id="CHEBI:57783"/>
        <dbReference type="ChEBI" id="CHEBI:58349"/>
        <dbReference type="ChEBI" id="CHEBI:132124"/>
        <dbReference type="EC" id="1.6.5.2"/>
    </reaction>
</comment>
<comment type="cofactor">
    <cofactor evidence="1">
        <name>FMN</name>
        <dbReference type="ChEBI" id="CHEBI:58210"/>
    </cofactor>
    <text evidence="1">Binds 1 FMN per monomer.</text>
</comment>
<comment type="similarity">
    <text evidence="1">Belongs to the WrbA family.</text>
</comment>
<accession>B9M4V3</accession>